<name>BGAL_YERE8</name>
<dbReference type="EC" id="3.2.1.23" evidence="1"/>
<dbReference type="EMBL" id="AM286415">
    <property type="protein sequence ID" value="CAL12630.1"/>
    <property type="molecule type" value="Genomic_DNA"/>
</dbReference>
<dbReference type="RefSeq" id="WP_011816626.1">
    <property type="nucleotide sequence ID" value="NC_008800.1"/>
</dbReference>
<dbReference type="RefSeq" id="YP_001006792.1">
    <property type="nucleotide sequence ID" value="NC_008800.1"/>
</dbReference>
<dbReference type="SMR" id="A1JTC4"/>
<dbReference type="CAZy" id="GH2">
    <property type="family name" value="Glycoside Hydrolase Family 2"/>
</dbReference>
<dbReference type="KEGG" id="yen:YE2592"/>
<dbReference type="PATRIC" id="fig|393305.7.peg.2750"/>
<dbReference type="eggNOG" id="COG3250">
    <property type="taxonomic scope" value="Bacteria"/>
</dbReference>
<dbReference type="HOGENOM" id="CLU_002346_0_2_6"/>
<dbReference type="OrthoDB" id="9758603at2"/>
<dbReference type="Proteomes" id="UP000000642">
    <property type="component" value="Chromosome"/>
</dbReference>
<dbReference type="GO" id="GO:0009341">
    <property type="term" value="C:beta-galactosidase complex"/>
    <property type="evidence" value="ECO:0007669"/>
    <property type="project" value="InterPro"/>
</dbReference>
<dbReference type="GO" id="GO:0004565">
    <property type="term" value="F:beta-galactosidase activity"/>
    <property type="evidence" value="ECO:0007669"/>
    <property type="project" value="UniProtKB-EC"/>
</dbReference>
<dbReference type="GO" id="GO:0030246">
    <property type="term" value="F:carbohydrate binding"/>
    <property type="evidence" value="ECO:0007669"/>
    <property type="project" value="InterPro"/>
</dbReference>
<dbReference type="GO" id="GO:0000287">
    <property type="term" value="F:magnesium ion binding"/>
    <property type="evidence" value="ECO:0007669"/>
    <property type="project" value="UniProtKB-UniRule"/>
</dbReference>
<dbReference type="GO" id="GO:0005990">
    <property type="term" value="P:lactose catabolic process"/>
    <property type="evidence" value="ECO:0007669"/>
    <property type="project" value="TreeGrafter"/>
</dbReference>
<dbReference type="FunFam" id="3.20.20.80:FF:000018">
    <property type="entry name" value="Beta-galactosidase"/>
    <property type="match status" value="1"/>
</dbReference>
<dbReference type="Gene3D" id="2.70.98.10">
    <property type="match status" value="1"/>
</dbReference>
<dbReference type="Gene3D" id="2.60.120.260">
    <property type="entry name" value="Galactose-binding domain-like"/>
    <property type="match status" value="1"/>
</dbReference>
<dbReference type="Gene3D" id="3.20.20.80">
    <property type="entry name" value="Glycosidases"/>
    <property type="match status" value="1"/>
</dbReference>
<dbReference type="Gene3D" id="2.60.40.10">
    <property type="entry name" value="Immunoglobulins"/>
    <property type="match status" value="2"/>
</dbReference>
<dbReference type="HAMAP" id="MF_01687">
    <property type="entry name" value="Beta_gal"/>
    <property type="match status" value="1"/>
</dbReference>
<dbReference type="InterPro" id="IPR004199">
    <property type="entry name" value="B-gal_small/dom_5"/>
</dbReference>
<dbReference type="InterPro" id="IPR050347">
    <property type="entry name" value="Bact_Beta-galactosidase"/>
</dbReference>
<dbReference type="InterPro" id="IPR036156">
    <property type="entry name" value="Beta-gal/glucu_dom_sf"/>
</dbReference>
<dbReference type="InterPro" id="IPR011013">
    <property type="entry name" value="Gal_mutarotase_sf_dom"/>
</dbReference>
<dbReference type="InterPro" id="IPR008979">
    <property type="entry name" value="Galactose-bd-like_sf"/>
</dbReference>
<dbReference type="InterPro" id="IPR014718">
    <property type="entry name" value="GH-type_carb-bd"/>
</dbReference>
<dbReference type="InterPro" id="IPR006101">
    <property type="entry name" value="Glyco_hydro_2"/>
</dbReference>
<dbReference type="InterPro" id="IPR023232">
    <property type="entry name" value="Glyco_hydro_2_AS"/>
</dbReference>
<dbReference type="InterPro" id="IPR023933">
    <property type="entry name" value="Glyco_hydro_2_beta_Galsidase"/>
</dbReference>
<dbReference type="InterPro" id="IPR006103">
    <property type="entry name" value="Glyco_hydro_2_cat"/>
</dbReference>
<dbReference type="InterPro" id="IPR023230">
    <property type="entry name" value="Glyco_hydro_2_CS"/>
</dbReference>
<dbReference type="InterPro" id="IPR006102">
    <property type="entry name" value="Glyco_hydro_2_Ig-like"/>
</dbReference>
<dbReference type="InterPro" id="IPR006104">
    <property type="entry name" value="Glyco_hydro_2_N"/>
</dbReference>
<dbReference type="InterPro" id="IPR017853">
    <property type="entry name" value="Glycoside_hydrolase_SF"/>
</dbReference>
<dbReference type="InterPro" id="IPR013783">
    <property type="entry name" value="Ig-like_fold"/>
</dbReference>
<dbReference type="InterPro" id="IPR032312">
    <property type="entry name" value="LacZ_4"/>
</dbReference>
<dbReference type="NCBIfam" id="NF007074">
    <property type="entry name" value="PRK09525.1"/>
    <property type="match status" value="1"/>
</dbReference>
<dbReference type="PANTHER" id="PTHR46323">
    <property type="entry name" value="BETA-GALACTOSIDASE"/>
    <property type="match status" value="1"/>
</dbReference>
<dbReference type="PANTHER" id="PTHR46323:SF2">
    <property type="entry name" value="BETA-GALACTOSIDASE"/>
    <property type="match status" value="1"/>
</dbReference>
<dbReference type="Pfam" id="PF02929">
    <property type="entry name" value="Bgal_small_N"/>
    <property type="match status" value="1"/>
</dbReference>
<dbReference type="Pfam" id="PF00703">
    <property type="entry name" value="Glyco_hydro_2"/>
    <property type="match status" value="1"/>
</dbReference>
<dbReference type="Pfam" id="PF02836">
    <property type="entry name" value="Glyco_hydro_2_C"/>
    <property type="match status" value="1"/>
</dbReference>
<dbReference type="Pfam" id="PF02837">
    <property type="entry name" value="Glyco_hydro_2_N"/>
    <property type="match status" value="1"/>
</dbReference>
<dbReference type="Pfam" id="PF16353">
    <property type="entry name" value="LacZ_4"/>
    <property type="match status" value="1"/>
</dbReference>
<dbReference type="PRINTS" id="PR00132">
    <property type="entry name" value="GLHYDRLASE2"/>
</dbReference>
<dbReference type="SMART" id="SM01038">
    <property type="entry name" value="Bgal_small_N"/>
    <property type="match status" value="1"/>
</dbReference>
<dbReference type="SUPFAM" id="SSF51445">
    <property type="entry name" value="(Trans)glycosidases"/>
    <property type="match status" value="1"/>
</dbReference>
<dbReference type="SUPFAM" id="SSF49303">
    <property type="entry name" value="beta-Galactosidase/glucuronidase domain"/>
    <property type="match status" value="2"/>
</dbReference>
<dbReference type="SUPFAM" id="SSF74650">
    <property type="entry name" value="Galactose mutarotase-like"/>
    <property type="match status" value="1"/>
</dbReference>
<dbReference type="SUPFAM" id="SSF49785">
    <property type="entry name" value="Galactose-binding domain-like"/>
    <property type="match status" value="1"/>
</dbReference>
<dbReference type="PROSITE" id="PS00719">
    <property type="entry name" value="GLYCOSYL_HYDROL_F2_1"/>
    <property type="match status" value="1"/>
</dbReference>
<dbReference type="PROSITE" id="PS00608">
    <property type="entry name" value="GLYCOSYL_HYDROL_F2_2"/>
    <property type="match status" value="1"/>
</dbReference>
<organism>
    <name type="scientific">Yersinia enterocolitica serotype O:8 / biotype 1B (strain NCTC 13174 / 8081)</name>
    <dbReference type="NCBI Taxonomy" id="393305"/>
    <lineage>
        <taxon>Bacteria</taxon>
        <taxon>Pseudomonadati</taxon>
        <taxon>Pseudomonadota</taxon>
        <taxon>Gammaproteobacteria</taxon>
        <taxon>Enterobacterales</taxon>
        <taxon>Yersiniaceae</taxon>
        <taxon>Yersinia</taxon>
    </lineage>
</organism>
<keyword id="KW-0326">Glycosidase</keyword>
<keyword id="KW-0378">Hydrolase</keyword>
<keyword id="KW-0460">Magnesium</keyword>
<keyword id="KW-0479">Metal-binding</keyword>
<keyword id="KW-0915">Sodium</keyword>
<evidence type="ECO:0000255" key="1">
    <source>
        <dbReference type="HAMAP-Rule" id="MF_01687"/>
    </source>
</evidence>
<protein>
    <recommendedName>
        <fullName evidence="1">Beta-galactosidase</fullName>
        <shortName evidence="1">Beta-gal</shortName>
        <ecNumber evidence="1">3.2.1.23</ecNumber>
    </recommendedName>
    <alternativeName>
        <fullName evidence="1">Lactase</fullName>
    </alternativeName>
</protein>
<reference key="1">
    <citation type="journal article" date="2006" name="PLoS Genet.">
        <title>The complete genome sequence and comparative genome analysis of the high pathogenicity Yersinia enterocolitica strain 8081.</title>
        <authorList>
            <person name="Thomson N.R."/>
            <person name="Howard S."/>
            <person name="Wren B.W."/>
            <person name="Holden M.T.G."/>
            <person name="Crossman L."/>
            <person name="Challis G.L."/>
            <person name="Churcher C."/>
            <person name="Mungall K."/>
            <person name="Brooks K."/>
            <person name="Chillingworth T."/>
            <person name="Feltwell T."/>
            <person name="Abdellah Z."/>
            <person name="Hauser H."/>
            <person name="Jagels K."/>
            <person name="Maddison M."/>
            <person name="Moule S."/>
            <person name="Sanders M."/>
            <person name="Whitehead S."/>
            <person name="Quail M.A."/>
            <person name="Dougan G."/>
            <person name="Parkhill J."/>
            <person name="Prentice M.B."/>
        </authorList>
    </citation>
    <scope>NUCLEOTIDE SEQUENCE [LARGE SCALE GENOMIC DNA]</scope>
    <source>
        <strain>NCTC 13174 / 8081</strain>
    </source>
</reference>
<feature type="chain" id="PRO_0000367014" description="Beta-galactosidase">
    <location>
        <begin position="1"/>
        <end position="1050"/>
    </location>
</feature>
<feature type="active site" description="Proton donor" evidence="1">
    <location>
        <position position="477"/>
    </location>
</feature>
<feature type="active site" description="Nucleophile" evidence="1">
    <location>
        <position position="553"/>
    </location>
</feature>
<feature type="binding site" evidence="1">
    <location>
        <position position="110"/>
    </location>
    <ligand>
        <name>substrate</name>
    </ligand>
</feature>
<feature type="binding site" evidence="1">
    <location>
        <position position="209"/>
    </location>
    <ligand>
        <name>Na(+)</name>
        <dbReference type="ChEBI" id="CHEBI:29101"/>
    </ligand>
</feature>
<feature type="binding site" evidence="1">
    <location>
        <position position="209"/>
    </location>
    <ligand>
        <name>substrate</name>
    </ligand>
</feature>
<feature type="binding site" evidence="1">
    <location>
        <position position="432"/>
    </location>
    <ligand>
        <name>Mg(2+)</name>
        <dbReference type="ChEBI" id="CHEBI:18420"/>
        <label>1</label>
    </ligand>
</feature>
<feature type="binding site" evidence="1">
    <location>
        <position position="434"/>
    </location>
    <ligand>
        <name>Mg(2+)</name>
        <dbReference type="ChEBI" id="CHEBI:18420"/>
        <label>1</label>
    </ligand>
</feature>
<feature type="binding site" evidence="1">
    <location>
        <position position="477"/>
    </location>
    <ligand>
        <name>Mg(2+)</name>
        <dbReference type="ChEBI" id="CHEBI:18420"/>
        <label>1</label>
    </ligand>
</feature>
<feature type="binding site" evidence="1">
    <location>
        <position position="477"/>
    </location>
    <ligand>
        <name>substrate</name>
    </ligand>
</feature>
<feature type="binding site" evidence="1">
    <location>
        <begin position="553"/>
        <end position="556"/>
    </location>
    <ligand>
        <name>substrate</name>
    </ligand>
</feature>
<feature type="binding site" evidence="1">
    <location>
        <position position="613"/>
    </location>
    <ligand>
        <name>Mg(2+)</name>
        <dbReference type="ChEBI" id="CHEBI:18420"/>
        <label>2</label>
    </ligand>
</feature>
<feature type="binding site" evidence="1">
    <location>
        <position position="617"/>
    </location>
    <ligand>
        <name>Na(+)</name>
        <dbReference type="ChEBI" id="CHEBI:29101"/>
    </ligand>
</feature>
<feature type="binding site" evidence="1">
    <location>
        <position position="620"/>
    </location>
    <ligand>
        <name>Na(+)</name>
        <dbReference type="ChEBI" id="CHEBI:29101"/>
    </ligand>
</feature>
<feature type="binding site" evidence="1">
    <location>
        <position position="620"/>
    </location>
    <ligand>
        <name>substrate</name>
    </ligand>
</feature>
<feature type="binding site" evidence="1">
    <location>
        <position position="1023"/>
    </location>
    <ligand>
        <name>substrate</name>
    </ligand>
</feature>
<feature type="site" description="Transition state stabilizer" evidence="1">
    <location>
        <position position="373"/>
    </location>
</feature>
<feature type="site" description="Transition state stabilizer" evidence="1">
    <location>
        <position position="407"/>
    </location>
</feature>
<sequence>MTAQQEVKPQATPALSQILFRRDWENPQITQYNRLEAHPPFYSWRHLDAAQNDTPSPQRQLLNGQWSFSYFTQPESVPDEWVEHDLPEAISMPVPSNWQLHGYDIPIYTNVQYPIPVDPPRVPQNNPTGCYSYNFTLEPDWILSGQTRIIFDGVNSAFYLWCNGRWVGYSQDSRLPAEFDLTPYLKAGNNRIAVLVLRWSDGSYLEDQDMWRMSGIFRDVSLLHKPDIHLRDIHISTHLSPEFSSAHLEVMAAVNIPLLDINNSQVTKAYQIQVQLWLADSLVASLRQPLGTQPIDERGHYTDRTHLSLRVEHPLLWSAEQPALYRTVVSLLDSQQKLIEAEAYDVGFRQVAIHQGLLKINGKAVLIRGVNRHEHHPQTGQAIDEESMLQDIILMKQHNFNAVRCSHYPNHPLWYRLCDRYGLYVVDEANIETHGMQPMRRLADDPQWFSAFSERVTRMVQRDRNHPCIIIWSLGNESGHGATHDALYRWIKTNDPTRPVQYEGGGANTQATDIVCPMYARVDEDQPFPAVPKWAIKKWIGLPNESRPLILCEYAHAMGNSFGGFARYWQAFRQYPRLQGGFVWDWVDQSLTRNDENGQPYWAYGGDFGDSPNDRQFCMNGLVFPDRTPHPCLYEAQCAQQFFQFSLVSTSPLIIKVTSEYLFRNSDNEHLYWRIELAGKSVLEGSFPLDLLPESTQQFSLTERLPAICGPGDLWLNVEVRQVEETPWSPSHHRCAWFQWRLPHSLAVLSRGLSDSATSNNLKLHQDIQHITVTHQQQHWQFNRQTGLLEQWCVGGENRLLTPLRDQFVRAPLDNDIGISETTRIDPNAWVERWKKAGIYQLEQRCLSLHADTLSQAIQISAEYIYEFAQEQLLHTHWLYRFDQQGHMTIDVRVQIATSLPSLARVGMCCQLSDIYENVEWLGLGPHENYPDRQLSAQHSHWSQPLDQMHTPYIFPSENGLRCNTSMLSYGNWQLTGQFHFGISRYSTQQLMAASHQHLLRSEAGTWLNIDGFHMGVGGDDSWSPSVHADNLLTNEIYQYQVCWQYKDSI</sequence>
<accession>A1JTC4</accession>
<comment type="catalytic activity">
    <reaction evidence="1">
        <text>Hydrolysis of terminal non-reducing beta-D-galactose residues in beta-D-galactosides.</text>
        <dbReference type="EC" id="3.2.1.23"/>
    </reaction>
</comment>
<comment type="cofactor">
    <cofactor evidence="1">
        <name>Mg(2+)</name>
        <dbReference type="ChEBI" id="CHEBI:18420"/>
    </cofactor>
    <text evidence="1">Binds 2 magnesium ions per monomer.</text>
</comment>
<comment type="cofactor">
    <cofactor evidence="1">
        <name>Na(+)</name>
        <dbReference type="ChEBI" id="CHEBI:29101"/>
    </cofactor>
    <text evidence="1">Binds 1 sodium ion per monomer.</text>
</comment>
<comment type="subunit">
    <text evidence="1">Homotetramer.</text>
</comment>
<comment type="similarity">
    <text evidence="1">Belongs to the glycosyl hydrolase 2 family.</text>
</comment>
<gene>
    <name evidence="1" type="primary">lacZ</name>
    <name type="ordered locus">YE2592</name>
</gene>
<proteinExistence type="inferred from homology"/>